<comment type="function">
    <text evidence="1">Catalyzes the conversion of allantoin (5-ureidohydantoin) to allantoic acid by hydrolytic cleavage of the five-member hydantoin ring.</text>
</comment>
<comment type="catalytic activity">
    <reaction evidence="1">
        <text>(S)-allantoin + H2O = allantoate + H(+)</text>
        <dbReference type="Rhea" id="RHEA:17029"/>
        <dbReference type="ChEBI" id="CHEBI:15377"/>
        <dbReference type="ChEBI" id="CHEBI:15378"/>
        <dbReference type="ChEBI" id="CHEBI:15678"/>
        <dbReference type="ChEBI" id="CHEBI:17536"/>
        <dbReference type="EC" id="3.5.2.5"/>
    </reaction>
</comment>
<comment type="cofactor">
    <cofactor evidence="1">
        <name>Zn(2+)</name>
        <dbReference type="ChEBI" id="CHEBI:29105"/>
    </cofactor>
    <text evidence="1">Binds 2 Zn(2+) ions per subunit.</text>
</comment>
<comment type="pathway">
    <text evidence="1">Nitrogen metabolism; (S)-allantoin degradation; allantoate from (S)-allantoin: step 1/1.</text>
</comment>
<comment type="subunit">
    <text evidence="1">Homotetramer.</text>
</comment>
<comment type="PTM">
    <text evidence="1">Carboxylation allows a single lysine to coordinate two zinc ions.</text>
</comment>
<comment type="similarity">
    <text evidence="1">Belongs to the metallo-dependent hydrolases superfamily. Allantoinase family.</text>
</comment>
<organism>
    <name type="scientific">Escherichia coli O81 (strain ED1a)</name>
    <dbReference type="NCBI Taxonomy" id="585397"/>
    <lineage>
        <taxon>Bacteria</taxon>
        <taxon>Pseudomonadati</taxon>
        <taxon>Pseudomonadota</taxon>
        <taxon>Gammaproteobacteria</taxon>
        <taxon>Enterobacterales</taxon>
        <taxon>Enterobacteriaceae</taxon>
        <taxon>Escherichia</taxon>
    </lineage>
</organism>
<keyword id="KW-0378">Hydrolase</keyword>
<keyword id="KW-0479">Metal-binding</keyword>
<keyword id="KW-0659">Purine metabolism</keyword>
<keyword id="KW-0862">Zinc</keyword>
<dbReference type="EC" id="3.5.2.5" evidence="1"/>
<dbReference type="EMBL" id="CU928162">
    <property type="protein sequence ID" value="CAR06740.1"/>
    <property type="molecule type" value="Genomic_DNA"/>
</dbReference>
<dbReference type="RefSeq" id="WP_000006873.1">
    <property type="nucleotide sequence ID" value="NC_011745.1"/>
</dbReference>
<dbReference type="SMR" id="B7MQM2"/>
<dbReference type="KEGG" id="ecq:ECED1_0531"/>
<dbReference type="HOGENOM" id="CLU_015572_4_2_6"/>
<dbReference type="UniPathway" id="UPA00395">
    <property type="reaction ID" value="UER00653"/>
</dbReference>
<dbReference type="Proteomes" id="UP000000748">
    <property type="component" value="Chromosome"/>
</dbReference>
<dbReference type="GO" id="GO:0005737">
    <property type="term" value="C:cytoplasm"/>
    <property type="evidence" value="ECO:0007669"/>
    <property type="project" value="TreeGrafter"/>
</dbReference>
<dbReference type="GO" id="GO:0004038">
    <property type="term" value="F:allantoinase activity"/>
    <property type="evidence" value="ECO:0007669"/>
    <property type="project" value="UniProtKB-UniRule"/>
</dbReference>
<dbReference type="GO" id="GO:0050897">
    <property type="term" value="F:cobalt ion binding"/>
    <property type="evidence" value="ECO:0007669"/>
    <property type="project" value="InterPro"/>
</dbReference>
<dbReference type="GO" id="GO:0008270">
    <property type="term" value="F:zinc ion binding"/>
    <property type="evidence" value="ECO:0007669"/>
    <property type="project" value="InterPro"/>
</dbReference>
<dbReference type="GO" id="GO:0000256">
    <property type="term" value="P:allantoin catabolic process"/>
    <property type="evidence" value="ECO:0007669"/>
    <property type="project" value="UniProtKB-UniRule"/>
</dbReference>
<dbReference type="GO" id="GO:0006145">
    <property type="term" value="P:purine nucleobase catabolic process"/>
    <property type="evidence" value="ECO:0007669"/>
    <property type="project" value="TreeGrafter"/>
</dbReference>
<dbReference type="CDD" id="cd01315">
    <property type="entry name" value="L-HYD_ALN"/>
    <property type="match status" value="1"/>
</dbReference>
<dbReference type="FunFam" id="3.20.20.140:FF:000013">
    <property type="entry name" value="Allantoinase"/>
    <property type="match status" value="1"/>
</dbReference>
<dbReference type="Gene3D" id="3.20.20.140">
    <property type="entry name" value="Metal-dependent hydrolases"/>
    <property type="match status" value="1"/>
</dbReference>
<dbReference type="Gene3D" id="2.30.40.10">
    <property type="entry name" value="Urease, subunit C, domain 1"/>
    <property type="match status" value="1"/>
</dbReference>
<dbReference type="HAMAP" id="MF_01645">
    <property type="entry name" value="Hydantoinase"/>
    <property type="match status" value="1"/>
</dbReference>
<dbReference type="InterPro" id="IPR017593">
    <property type="entry name" value="Allantoinase"/>
</dbReference>
<dbReference type="InterPro" id="IPR047604">
    <property type="entry name" value="Allantoinase_bact"/>
</dbReference>
<dbReference type="InterPro" id="IPR006680">
    <property type="entry name" value="Amidohydro-rel"/>
</dbReference>
<dbReference type="InterPro" id="IPR050138">
    <property type="entry name" value="DHOase/Allantoinase_Hydrolase"/>
</dbReference>
<dbReference type="InterPro" id="IPR011059">
    <property type="entry name" value="Metal-dep_hydrolase_composite"/>
</dbReference>
<dbReference type="InterPro" id="IPR032466">
    <property type="entry name" value="Metal_Hydrolase"/>
</dbReference>
<dbReference type="NCBIfam" id="TIGR03178">
    <property type="entry name" value="allantoinase"/>
    <property type="match status" value="1"/>
</dbReference>
<dbReference type="NCBIfam" id="NF005960">
    <property type="entry name" value="PRK08044.1"/>
    <property type="match status" value="1"/>
</dbReference>
<dbReference type="PANTHER" id="PTHR43668">
    <property type="entry name" value="ALLANTOINASE"/>
    <property type="match status" value="1"/>
</dbReference>
<dbReference type="PANTHER" id="PTHR43668:SF4">
    <property type="entry name" value="ALLANTOINASE"/>
    <property type="match status" value="1"/>
</dbReference>
<dbReference type="Pfam" id="PF01979">
    <property type="entry name" value="Amidohydro_1"/>
    <property type="match status" value="1"/>
</dbReference>
<dbReference type="SUPFAM" id="SSF51338">
    <property type="entry name" value="Composite domain of metallo-dependent hydrolases"/>
    <property type="match status" value="1"/>
</dbReference>
<dbReference type="SUPFAM" id="SSF51556">
    <property type="entry name" value="Metallo-dependent hydrolases"/>
    <property type="match status" value="1"/>
</dbReference>
<name>ALLB_ECO81</name>
<evidence type="ECO:0000255" key="1">
    <source>
        <dbReference type="HAMAP-Rule" id="MF_01645"/>
    </source>
</evidence>
<accession>B7MQM2</accession>
<sequence length="453" mass="49588">MSFDLIIKNGTVILENEARVVDIAVKDGKIAAIGQDLGDAKDVMDASGLVVSPGMVDAHTHISEPGRSHWEGYETGTRAAAKGGITTMIEMPLNQLPATVDRASIELKFDAAKGKLTIDAAQLGGLVSYNIDRLHELDEVGVVGFKCFVATCGDRGIDNDFRDVNDWQFFKGAQKLGELGQPVLVHCENALICDALGEEAKREGRVTAHDYVASRPVFTEVEAIRRVLYLAKVAGCRLHVCHVSSPEGVEEVTRARQEGQDVTCESCPHYFVLDTDQFEEIGTLAKCSPPIRDLENQKGMWEKLFNGEIDCLVSDHSPCPPEMKAGNIMKAWGGIAGLQSCMDVMFDEAVQKRGMSLPMFGKLMATNAADIFGLQQKGRIAPGKDADFVFIQPNSSYVLTNDDLEYRHKVSPYVGRTIGARITKTILRGDVIYDIEQGFPVAPKGQFILKHQQ</sequence>
<protein>
    <recommendedName>
        <fullName evidence="1">Allantoinase</fullName>
        <ecNumber evidence="1">3.5.2.5</ecNumber>
    </recommendedName>
    <alternativeName>
        <fullName evidence="1">Allantoin-utilizing enzyme</fullName>
    </alternativeName>
</protein>
<feature type="chain" id="PRO_1000186920" description="Allantoinase">
    <location>
        <begin position="1"/>
        <end position="453"/>
    </location>
</feature>
<feature type="binding site" evidence="1">
    <location>
        <position position="59"/>
    </location>
    <ligand>
        <name>Zn(2+)</name>
        <dbReference type="ChEBI" id="CHEBI:29105"/>
        <label>1</label>
    </ligand>
</feature>
<feature type="binding site" evidence="1">
    <location>
        <position position="61"/>
    </location>
    <ligand>
        <name>Zn(2+)</name>
        <dbReference type="ChEBI" id="CHEBI:29105"/>
        <label>1</label>
    </ligand>
</feature>
<feature type="binding site" description="via carbamate group" evidence="1">
    <location>
        <position position="146"/>
    </location>
    <ligand>
        <name>Zn(2+)</name>
        <dbReference type="ChEBI" id="CHEBI:29105"/>
        <label>1</label>
    </ligand>
</feature>
<feature type="binding site" description="via carbamate group" evidence="1">
    <location>
        <position position="146"/>
    </location>
    <ligand>
        <name>Zn(2+)</name>
        <dbReference type="ChEBI" id="CHEBI:29105"/>
        <label>2</label>
    </ligand>
</feature>
<feature type="binding site" evidence="1">
    <location>
        <position position="186"/>
    </location>
    <ligand>
        <name>Zn(2+)</name>
        <dbReference type="ChEBI" id="CHEBI:29105"/>
        <label>2</label>
    </ligand>
</feature>
<feature type="binding site" evidence="1">
    <location>
        <position position="242"/>
    </location>
    <ligand>
        <name>Zn(2+)</name>
        <dbReference type="ChEBI" id="CHEBI:29105"/>
        <label>2</label>
    </ligand>
</feature>
<feature type="binding site" evidence="1">
    <location>
        <position position="315"/>
    </location>
    <ligand>
        <name>Zn(2+)</name>
        <dbReference type="ChEBI" id="CHEBI:29105"/>
        <label>1</label>
    </ligand>
</feature>
<feature type="modified residue" description="N6-carboxylysine" evidence="1">
    <location>
        <position position="146"/>
    </location>
</feature>
<proteinExistence type="inferred from homology"/>
<gene>
    <name evidence="1" type="primary">allB</name>
    <name type="ordered locus">ECED1_0531</name>
</gene>
<reference key="1">
    <citation type="journal article" date="2009" name="PLoS Genet.">
        <title>Organised genome dynamics in the Escherichia coli species results in highly diverse adaptive paths.</title>
        <authorList>
            <person name="Touchon M."/>
            <person name="Hoede C."/>
            <person name="Tenaillon O."/>
            <person name="Barbe V."/>
            <person name="Baeriswyl S."/>
            <person name="Bidet P."/>
            <person name="Bingen E."/>
            <person name="Bonacorsi S."/>
            <person name="Bouchier C."/>
            <person name="Bouvet O."/>
            <person name="Calteau A."/>
            <person name="Chiapello H."/>
            <person name="Clermont O."/>
            <person name="Cruveiller S."/>
            <person name="Danchin A."/>
            <person name="Diard M."/>
            <person name="Dossat C."/>
            <person name="Karoui M.E."/>
            <person name="Frapy E."/>
            <person name="Garry L."/>
            <person name="Ghigo J.M."/>
            <person name="Gilles A.M."/>
            <person name="Johnson J."/>
            <person name="Le Bouguenec C."/>
            <person name="Lescat M."/>
            <person name="Mangenot S."/>
            <person name="Martinez-Jehanne V."/>
            <person name="Matic I."/>
            <person name="Nassif X."/>
            <person name="Oztas S."/>
            <person name="Petit M.A."/>
            <person name="Pichon C."/>
            <person name="Rouy Z."/>
            <person name="Ruf C.S."/>
            <person name="Schneider D."/>
            <person name="Tourret J."/>
            <person name="Vacherie B."/>
            <person name="Vallenet D."/>
            <person name="Medigue C."/>
            <person name="Rocha E.P.C."/>
            <person name="Denamur E."/>
        </authorList>
    </citation>
    <scope>NUCLEOTIDE SEQUENCE [LARGE SCALE GENOMIC DNA]</scope>
    <source>
        <strain>ED1a</strain>
    </source>
</reference>